<organism>
    <name type="scientific">Rhizobium radiobacter</name>
    <name type="common">Agrobacterium tumefaciens</name>
    <name type="synonym">Agrobacterium radiobacter</name>
    <dbReference type="NCBI Taxonomy" id="358"/>
    <lineage>
        <taxon>Bacteria</taxon>
        <taxon>Pseudomonadati</taxon>
        <taxon>Pseudomonadota</taxon>
        <taxon>Alphaproteobacteria</taxon>
        <taxon>Hyphomicrobiales</taxon>
        <taxon>Rhizobiaceae</taxon>
        <taxon>Rhizobium/Agrobacterium group</taxon>
        <taxon>Agrobacterium</taxon>
        <taxon>Agrobacterium tumefaciens complex</taxon>
    </lineage>
</organism>
<keyword id="KW-0192">Crown gall tumor</keyword>
<keyword id="KW-0614">Plasmid</keyword>
<accession>P06666</accession>
<evidence type="ECO:0000256" key="1">
    <source>
        <dbReference type="SAM" id="MobiDB-lite"/>
    </source>
</evidence>
<feature type="chain" id="PRO_0000065854" description="Protein virC2">
    <location>
        <begin position="1"/>
        <end position="202"/>
    </location>
</feature>
<feature type="region of interest" description="Disordered" evidence="1">
    <location>
        <begin position="24"/>
        <end position="56"/>
    </location>
</feature>
<feature type="compositionally biased region" description="Basic and acidic residues" evidence="1">
    <location>
        <begin position="36"/>
        <end position="56"/>
    </location>
</feature>
<gene>
    <name type="primary">virC2</name>
</gene>
<proteinExistence type="predicted"/>
<comment type="miscellaneous">
    <text>The Ti plasmid contains at least six transcriptional units, designated vir loci, which are essential for efficient crown-gall tumorigenesis.</text>
</comment>
<comment type="miscellaneous">
    <text>The translation of virC1 and virC2 may be coupled.</text>
</comment>
<protein>
    <recommendedName>
        <fullName>Protein virC2</fullName>
    </recommendedName>
</protein>
<name>VIRC2_RHIRD</name>
<sequence length="202" mass="22694">MAIRKPALSVSEARRLAVARSEIHHPNPTLVPQELDLQHLPEKADEKDQQREPPVAEHIYSPDRQLKLTVDALSPPPSPKKLQVFLSARPPAPQVSKTYDNLVRQYSPSKSLQMILRRALDDFESMLADGSFRVALKSYPIPLTTEKSVLVQTSRMFPVALLEVARSHFDPLGLETTRAFGHKLATAALASFFAREKPSRNW</sequence>
<reference key="1">
    <citation type="journal article" date="1986" name="J. Bacteriol.">
        <title>Molecular characterization of a host-range-determining locus from Agrobacterium tumefaciens.</title>
        <authorList>
            <person name="Yanofsky M.F."/>
            <person name="Nester E.W."/>
        </authorList>
    </citation>
    <scope>NUCLEOTIDE SEQUENCE [GENOMIC DNA]</scope>
</reference>
<dbReference type="EMBL" id="AF242881">
    <property type="protein sequence ID" value="AAA27408.1"/>
    <property type="molecule type" value="Genomic_DNA"/>
</dbReference>
<dbReference type="PIR" id="B25036">
    <property type="entry name" value="B25036"/>
</dbReference>
<dbReference type="RefSeq" id="NP_059811.1">
    <property type="nucleotide sequence ID" value="NC_002377.1"/>
</dbReference>
<dbReference type="RefSeq" id="WP_010892499.1">
    <property type="nucleotide sequence ID" value="NZ_QSNU01000012.1"/>
</dbReference>
<dbReference type="SMR" id="P06666"/>
<dbReference type="OrthoDB" id="8373325at2"/>
<dbReference type="GO" id="GO:0006355">
    <property type="term" value="P:regulation of DNA-templated transcription"/>
    <property type="evidence" value="ECO:0007669"/>
    <property type="project" value="InterPro"/>
</dbReference>
<dbReference type="Gene3D" id="1.10.1220.190">
    <property type="entry name" value="VirC2, RHH domain"/>
    <property type="match status" value="1"/>
</dbReference>
<dbReference type="InterPro" id="IPR010985">
    <property type="entry name" value="Ribbon_hlx_hlx"/>
</dbReference>
<dbReference type="InterPro" id="IPR009841">
    <property type="entry name" value="VirC2"/>
</dbReference>
<dbReference type="InterPro" id="IPR038473">
    <property type="entry name" value="VirC2_C_sf"/>
</dbReference>
<dbReference type="NCBIfam" id="NF010436">
    <property type="entry name" value="PRK13862.1"/>
    <property type="match status" value="1"/>
</dbReference>
<dbReference type="Pfam" id="PF07181">
    <property type="entry name" value="VirC2"/>
    <property type="match status" value="1"/>
</dbReference>
<dbReference type="PIRSF" id="PIRSF016094">
    <property type="entry name" value="VirC2"/>
    <property type="match status" value="1"/>
</dbReference>
<dbReference type="SUPFAM" id="SSF47598">
    <property type="entry name" value="Ribbon-helix-helix"/>
    <property type="match status" value="1"/>
</dbReference>
<geneLocation type="plasmid">
    <name>pTiA6NC</name>
</geneLocation>